<gene>
    <name evidence="1" type="primary">rlmH</name>
    <name type="ordered locus">VP0723</name>
</gene>
<organism>
    <name type="scientific">Vibrio parahaemolyticus serotype O3:K6 (strain RIMD 2210633)</name>
    <dbReference type="NCBI Taxonomy" id="223926"/>
    <lineage>
        <taxon>Bacteria</taxon>
        <taxon>Pseudomonadati</taxon>
        <taxon>Pseudomonadota</taxon>
        <taxon>Gammaproteobacteria</taxon>
        <taxon>Vibrionales</taxon>
        <taxon>Vibrionaceae</taxon>
        <taxon>Vibrio</taxon>
    </lineage>
</organism>
<comment type="function">
    <text evidence="1">Specifically methylates the pseudouridine at position 1915 (m3Psi1915) in 23S rRNA.</text>
</comment>
<comment type="catalytic activity">
    <reaction evidence="1">
        <text>pseudouridine(1915) in 23S rRNA + S-adenosyl-L-methionine = N(3)-methylpseudouridine(1915) in 23S rRNA + S-adenosyl-L-homocysteine + H(+)</text>
        <dbReference type="Rhea" id="RHEA:42752"/>
        <dbReference type="Rhea" id="RHEA-COMP:10221"/>
        <dbReference type="Rhea" id="RHEA-COMP:10222"/>
        <dbReference type="ChEBI" id="CHEBI:15378"/>
        <dbReference type="ChEBI" id="CHEBI:57856"/>
        <dbReference type="ChEBI" id="CHEBI:59789"/>
        <dbReference type="ChEBI" id="CHEBI:65314"/>
        <dbReference type="ChEBI" id="CHEBI:74486"/>
        <dbReference type="EC" id="2.1.1.177"/>
    </reaction>
</comment>
<comment type="subunit">
    <text evidence="1">Homodimer.</text>
</comment>
<comment type="subcellular location">
    <subcellularLocation>
        <location evidence="1">Cytoplasm</location>
    </subcellularLocation>
</comment>
<comment type="similarity">
    <text evidence="1">Belongs to the RNA methyltransferase RlmH family.</text>
</comment>
<keyword id="KW-0963">Cytoplasm</keyword>
<keyword id="KW-0489">Methyltransferase</keyword>
<keyword id="KW-0698">rRNA processing</keyword>
<keyword id="KW-0949">S-adenosyl-L-methionine</keyword>
<keyword id="KW-0808">Transferase</keyword>
<proteinExistence type="inferred from homology"/>
<dbReference type="EC" id="2.1.1.177" evidence="1"/>
<dbReference type="EMBL" id="BA000031">
    <property type="protein sequence ID" value="BAC58986.1"/>
    <property type="molecule type" value="Genomic_DNA"/>
</dbReference>
<dbReference type="RefSeq" id="NP_797102.1">
    <property type="nucleotide sequence ID" value="NC_004603.1"/>
</dbReference>
<dbReference type="RefSeq" id="WP_005456129.1">
    <property type="nucleotide sequence ID" value="NC_004603.1"/>
</dbReference>
<dbReference type="SMR" id="Q87RQ4"/>
<dbReference type="GeneID" id="1188198"/>
<dbReference type="KEGG" id="vpa:VP0723"/>
<dbReference type="PATRIC" id="fig|223926.6.peg.692"/>
<dbReference type="eggNOG" id="COG1576">
    <property type="taxonomic scope" value="Bacteria"/>
</dbReference>
<dbReference type="HOGENOM" id="CLU_100552_1_0_6"/>
<dbReference type="Proteomes" id="UP000002493">
    <property type="component" value="Chromosome 1"/>
</dbReference>
<dbReference type="GO" id="GO:0005737">
    <property type="term" value="C:cytoplasm"/>
    <property type="evidence" value="ECO:0007669"/>
    <property type="project" value="UniProtKB-SubCell"/>
</dbReference>
<dbReference type="GO" id="GO:0070038">
    <property type="term" value="F:rRNA (pseudouridine-N3-)-methyltransferase activity"/>
    <property type="evidence" value="ECO:0007669"/>
    <property type="project" value="UniProtKB-UniRule"/>
</dbReference>
<dbReference type="CDD" id="cd18081">
    <property type="entry name" value="RlmH-like"/>
    <property type="match status" value="1"/>
</dbReference>
<dbReference type="Gene3D" id="3.40.1280.10">
    <property type="match status" value="1"/>
</dbReference>
<dbReference type="HAMAP" id="MF_00658">
    <property type="entry name" value="23SrRNA_methyltr_H"/>
    <property type="match status" value="1"/>
</dbReference>
<dbReference type="InterPro" id="IPR029028">
    <property type="entry name" value="Alpha/beta_knot_MTases"/>
</dbReference>
<dbReference type="InterPro" id="IPR003742">
    <property type="entry name" value="RlmH-like"/>
</dbReference>
<dbReference type="InterPro" id="IPR029026">
    <property type="entry name" value="tRNA_m1G_MTases_N"/>
</dbReference>
<dbReference type="NCBIfam" id="NF000984">
    <property type="entry name" value="PRK00103.1-1"/>
    <property type="match status" value="1"/>
</dbReference>
<dbReference type="NCBIfam" id="NF000986">
    <property type="entry name" value="PRK00103.1-4"/>
    <property type="match status" value="1"/>
</dbReference>
<dbReference type="NCBIfam" id="TIGR00246">
    <property type="entry name" value="tRNA_RlmH_YbeA"/>
    <property type="match status" value="1"/>
</dbReference>
<dbReference type="PANTHER" id="PTHR33603">
    <property type="entry name" value="METHYLTRANSFERASE"/>
    <property type="match status" value="1"/>
</dbReference>
<dbReference type="PANTHER" id="PTHR33603:SF1">
    <property type="entry name" value="RIBOSOMAL RNA LARGE SUBUNIT METHYLTRANSFERASE H"/>
    <property type="match status" value="1"/>
</dbReference>
<dbReference type="Pfam" id="PF02590">
    <property type="entry name" value="SPOUT_MTase"/>
    <property type="match status" value="1"/>
</dbReference>
<dbReference type="PIRSF" id="PIRSF004505">
    <property type="entry name" value="MT_bac"/>
    <property type="match status" value="1"/>
</dbReference>
<dbReference type="SUPFAM" id="SSF75217">
    <property type="entry name" value="alpha/beta knot"/>
    <property type="match status" value="1"/>
</dbReference>
<name>RLMH_VIBPA</name>
<evidence type="ECO:0000255" key="1">
    <source>
        <dbReference type="HAMAP-Rule" id="MF_00658"/>
    </source>
</evidence>
<reference key="1">
    <citation type="journal article" date="2003" name="Lancet">
        <title>Genome sequence of Vibrio parahaemolyticus: a pathogenic mechanism distinct from that of V. cholerae.</title>
        <authorList>
            <person name="Makino K."/>
            <person name="Oshima K."/>
            <person name="Kurokawa K."/>
            <person name="Yokoyama K."/>
            <person name="Uda T."/>
            <person name="Tagomori K."/>
            <person name="Iijima Y."/>
            <person name="Najima M."/>
            <person name="Nakano M."/>
            <person name="Yamashita A."/>
            <person name="Kubota Y."/>
            <person name="Kimura S."/>
            <person name="Yasunaga T."/>
            <person name="Honda T."/>
            <person name="Shinagawa H."/>
            <person name="Hattori M."/>
            <person name="Iida T."/>
        </authorList>
    </citation>
    <scope>NUCLEOTIDE SEQUENCE [LARGE SCALE GENOMIC DNA]</scope>
    <source>
        <strain>RIMD 2210633</strain>
    </source>
</reference>
<accession>Q87RQ4</accession>
<protein>
    <recommendedName>
        <fullName evidence="1">Ribosomal RNA large subunit methyltransferase H</fullName>
        <ecNumber evidence="1">2.1.1.177</ecNumber>
    </recommendedName>
    <alternativeName>
        <fullName evidence="1">23S rRNA (pseudouridine1915-N3)-methyltransferase</fullName>
    </alternativeName>
    <alternativeName>
        <fullName evidence="1">23S rRNA m3Psi1915 methyltransferase</fullName>
    </alternativeName>
    <alternativeName>
        <fullName evidence="1">rRNA (pseudouridine-N3-)-methyltransferase RlmH</fullName>
    </alternativeName>
</protein>
<sequence length="156" mass="17417">MKIQLIAVGTKMPKWVEEGFQEYRRRFPHDMPLELVEISAGKRGKNADIARILQKEGEAMLAAVPKGNRIVTLDIPGKKWDTPQLAEQLEAWKLDGRDVSILIGGPEGLAPACKAAADQSWSLSALTLPHPLVRIVMAESLYRAWSITANHPYHRE</sequence>
<feature type="chain" id="PRO_0000198208" description="Ribosomal RNA large subunit methyltransferase H">
    <location>
        <begin position="1"/>
        <end position="156"/>
    </location>
</feature>
<feature type="binding site" evidence="1">
    <location>
        <position position="73"/>
    </location>
    <ligand>
        <name>S-adenosyl-L-methionine</name>
        <dbReference type="ChEBI" id="CHEBI:59789"/>
    </ligand>
</feature>
<feature type="binding site" evidence="1">
    <location>
        <position position="104"/>
    </location>
    <ligand>
        <name>S-adenosyl-L-methionine</name>
        <dbReference type="ChEBI" id="CHEBI:59789"/>
    </ligand>
</feature>
<feature type="binding site" evidence="1">
    <location>
        <begin position="123"/>
        <end position="128"/>
    </location>
    <ligand>
        <name>S-adenosyl-L-methionine</name>
        <dbReference type="ChEBI" id="CHEBI:59789"/>
    </ligand>
</feature>